<sequence>MTSKNPIQKALYLTFERAQWSELRDSVPLTLSERDLENLRGINEKVSLSEVTDIYLPLSRLLNLIVKSKQQRGLVLDEFLGQKPFHSPYIISIAGSVAVGKSTTARVLQALLQHWPEHPKVDLVTTDGFLYPLADLKRKGLLQRKGFPESYDMKMLVEFISAVKSGQPHTKAPIYSHVTYDRVRNQHQIVSQPDILILEGLNVLQTGLDSPVDTRRPFVSDFVDFSIYVDAEESLLKQWYQERFLQFRKGAFSDAKSYFHHYANLTDDEANAIAANIWDTINGPNLQLNIQPTRERAHLILQKGQDHLMSHVLMRK</sequence>
<organism>
    <name type="scientific">Shewanella putrefaciens (strain CN-32 / ATCC BAA-453)</name>
    <dbReference type="NCBI Taxonomy" id="319224"/>
    <lineage>
        <taxon>Bacteria</taxon>
        <taxon>Pseudomonadati</taxon>
        <taxon>Pseudomonadota</taxon>
        <taxon>Gammaproteobacteria</taxon>
        <taxon>Alteromonadales</taxon>
        <taxon>Shewanellaceae</taxon>
        <taxon>Shewanella</taxon>
    </lineage>
</organism>
<evidence type="ECO:0000255" key="1">
    <source>
        <dbReference type="HAMAP-Rule" id="MF_00215"/>
    </source>
</evidence>
<reference key="1">
    <citation type="submission" date="2007-04" db="EMBL/GenBank/DDBJ databases">
        <title>Complete sequence of Shewanella putrefaciens CN-32.</title>
        <authorList>
            <consortium name="US DOE Joint Genome Institute"/>
            <person name="Copeland A."/>
            <person name="Lucas S."/>
            <person name="Lapidus A."/>
            <person name="Barry K."/>
            <person name="Detter J.C."/>
            <person name="Glavina del Rio T."/>
            <person name="Hammon N."/>
            <person name="Israni S."/>
            <person name="Dalin E."/>
            <person name="Tice H."/>
            <person name="Pitluck S."/>
            <person name="Chain P."/>
            <person name="Malfatti S."/>
            <person name="Shin M."/>
            <person name="Vergez L."/>
            <person name="Schmutz J."/>
            <person name="Larimer F."/>
            <person name="Land M."/>
            <person name="Hauser L."/>
            <person name="Kyrpides N."/>
            <person name="Mikhailova N."/>
            <person name="Romine M.F."/>
            <person name="Fredrickson J."/>
            <person name="Tiedje J."/>
            <person name="Richardson P."/>
        </authorList>
    </citation>
    <scope>NUCLEOTIDE SEQUENCE [LARGE SCALE GENOMIC DNA]</scope>
    <source>
        <strain>CN-32 / ATCC BAA-453</strain>
    </source>
</reference>
<name>COAA_SHEPC</name>
<accession>A4YBZ8</accession>
<comment type="catalytic activity">
    <reaction evidence="1">
        <text>(R)-pantothenate + ATP = (R)-4'-phosphopantothenate + ADP + H(+)</text>
        <dbReference type="Rhea" id="RHEA:16373"/>
        <dbReference type="ChEBI" id="CHEBI:10986"/>
        <dbReference type="ChEBI" id="CHEBI:15378"/>
        <dbReference type="ChEBI" id="CHEBI:29032"/>
        <dbReference type="ChEBI" id="CHEBI:30616"/>
        <dbReference type="ChEBI" id="CHEBI:456216"/>
        <dbReference type="EC" id="2.7.1.33"/>
    </reaction>
</comment>
<comment type="pathway">
    <text evidence="1">Cofactor biosynthesis; coenzyme A biosynthesis; CoA from (R)-pantothenate: step 1/5.</text>
</comment>
<comment type="subcellular location">
    <subcellularLocation>
        <location evidence="1">Cytoplasm</location>
    </subcellularLocation>
</comment>
<comment type="similarity">
    <text evidence="1">Belongs to the prokaryotic pantothenate kinase family.</text>
</comment>
<protein>
    <recommendedName>
        <fullName evidence="1">Pantothenate kinase</fullName>
        <ecNumber evidence="1">2.7.1.33</ecNumber>
    </recommendedName>
    <alternativeName>
        <fullName evidence="1">Pantothenic acid kinase</fullName>
    </alternativeName>
</protein>
<proteinExistence type="inferred from homology"/>
<keyword id="KW-0067">ATP-binding</keyword>
<keyword id="KW-0173">Coenzyme A biosynthesis</keyword>
<keyword id="KW-0963">Cytoplasm</keyword>
<keyword id="KW-0418">Kinase</keyword>
<keyword id="KW-0547">Nucleotide-binding</keyword>
<keyword id="KW-0808">Transferase</keyword>
<feature type="chain" id="PRO_1000043252" description="Pantothenate kinase">
    <location>
        <begin position="1"/>
        <end position="316"/>
    </location>
</feature>
<feature type="binding site" evidence="1">
    <location>
        <begin position="95"/>
        <end position="102"/>
    </location>
    <ligand>
        <name>ATP</name>
        <dbReference type="ChEBI" id="CHEBI:30616"/>
    </ligand>
</feature>
<dbReference type="EC" id="2.7.1.33" evidence="1"/>
<dbReference type="EMBL" id="CP000681">
    <property type="protein sequence ID" value="ABP77481.1"/>
    <property type="molecule type" value="Genomic_DNA"/>
</dbReference>
<dbReference type="SMR" id="A4YBZ8"/>
<dbReference type="STRING" id="319224.Sputcn32_3774"/>
<dbReference type="KEGG" id="spc:Sputcn32_3774"/>
<dbReference type="eggNOG" id="COG1072">
    <property type="taxonomic scope" value="Bacteria"/>
</dbReference>
<dbReference type="HOGENOM" id="CLU_053818_1_1_6"/>
<dbReference type="UniPathway" id="UPA00241">
    <property type="reaction ID" value="UER00352"/>
</dbReference>
<dbReference type="GO" id="GO:0005737">
    <property type="term" value="C:cytoplasm"/>
    <property type="evidence" value="ECO:0007669"/>
    <property type="project" value="UniProtKB-SubCell"/>
</dbReference>
<dbReference type="GO" id="GO:0005524">
    <property type="term" value="F:ATP binding"/>
    <property type="evidence" value="ECO:0007669"/>
    <property type="project" value="UniProtKB-UniRule"/>
</dbReference>
<dbReference type="GO" id="GO:0004594">
    <property type="term" value="F:pantothenate kinase activity"/>
    <property type="evidence" value="ECO:0007669"/>
    <property type="project" value="UniProtKB-UniRule"/>
</dbReference>
<dbReference type="GO" id="GO:0015937">
    <property type="term" value="P:coenzyme A biosynthetic process"/>
    <property type="evidence" value="ECO:0007669"/>
    <property type="project" value="UniProtKB-UniRule"/>
</dbReference>
<dbReference type="CDD" id="cd02025">
    <property type="entry name" value="PanK"/>
    <property type="match status" value="1"/>
</dbReference>
<dbReference type="FunFam" id="3.40.50.300:FF:000242">
    <property type="entry name" value="Pantothenate kinase"/>
    <property type="match status" value="1"/>
</dbReference>
<dbReference type="Gene3D" id="3.40.50.300">
    <property type="entry name" value="P-loop containing nucleotide triphosphate hydrolases"/>
    <property type="match status" value="1"/>
</dbReference>
<dbReference type="HAMAP" id="MF_00215">
    <property type="entry name" value="Pantothen_kinase_1"/>
    <property type="match status" value="1"/>
</dbReference>
<dbReference type="InterPro" id="IPR027417">
    <property type="entry name" value="P-loop_NTPase"/>
</dbReference>
<dbReference type="InterPro" id="IPR004566">
    <property type="entry name" value="PanK"/>
</dbReference>
<dbReference type="InterPro" id="IPR006083">
    <property type="entry name" value="PRK/URK"/>
</dbReference>
<dbReference type="NCBIfam" id="TIGR00554">
    <property type="entry name" value="panK_bact"/>
    <property type="match status" value="1"/>
</dbReference>
<dbReference type="PANTHER" id="PTHR10285">
    <property type="entry name" value="URIDINE KINASE"/>
    <property type="match status" value="1"/>
</dbReference>
<dbReference type="Pfam" id="PF00485">
    <property type="entry name" value="PRK"/>
    <property type="match status" value="1"/>
</dbReference>
<dbReference type="PIRSF" id="PIRSF000545">
    <property type="entry name" value="Pantothenate_kin"/>
    <property type="match status" value="1"/>
</dbReference>
<dbReference type="SUPFAM" id="SSF52540">
    <property type="entry name" value="P-loop containing nucleoside triphosphate hydrolases"/>
    <property type="match status" value="1"/>
</dbReference>
<gene>
    <name evidence="1" type="primary">coaA</name>
    <name type="ordered locus">Sputcn32_3774</name>
</gene>